<feature type="chain" id="PRO_0000367445" description="RNA polymerase sigma factor SigS">
    <location>
        <begin position="1"/>
        <end position="156"/>
    </location>
</feature>
<feature type="DNA-binding region" description="H-T-H motif" evidence="1">
    <location>
        <begin position="126"/>
        <end position="145"/>
    </location>
</feature>
<feature type="short sequence motif" description="Polymerase core binding">
    <location>
        <begin position="29"/>
        <end position="44"/>
    </location>
</feature>
<accession>Q5HEZ8</accession>
<comment type="function">
    <text evidence="1">Sigma factors are initiation factors that promote the attachment of RNA polymerase to specific initiation sites and are then released. Sigma-S contributes to the protection against external stress, thus playing a role in cellular fitness and survival (By similarity).</text>
</comment>
<comment type="similarity">
    <text evidence="2">Belongs to the sigma-70 factor family.</text>
</comment>
<keyword id="KW-0238">DNA-binding</keyword>
<keyword id="KW-0731">Sigma factor</keyword>
<keyword id="KW-0804">Transcription</keyword>
<keyword id="KW-0805">Transcription regulation</keyword>
<dbReference type="EMBL" id="CP000046">
    <property type="protein sequence ID" value="AAW38354.1"/>
    <property type="molecule type" value="Genomic_DNA"/>
</dbReference>
<dbReference type="RefSeq" id="WP_000671052.1">
    <property type="nucleotide sequence ID" value="NZ_JBGOFO010000008.1"/>
</dbReference>
<dbReference type="SMR" id="Q5HEZ8"/>
<dbReference type="KEGG" id="sac:SACOL1827"/>
<dbReference type="HOGENOM" id="CLU_047691_20_2_9"/>
<dbReference type="Proteomes" id="UP000000530">
    <property type="component" value="Chromosome"/>
</dbReference>
<dbReference type="GO" id="GO:0003677">
    <property type="term" value="F:DNA binding"/>
    <property type="evidence" value="ECO:0007669"/>
    <property type="project" value="UniProtKB-KW"/>
</dbReference>
<dbReference type="GO" id="GO:0016987">
    <property type="term" value="F:sigma factor activity"/>
    <property type="evidence" value="ECO:0007669"/>
    <property type="project" value="UniProtKB-KW"/>
</dbReference>
<dbReference type="GO" id="GO:0006352">
    <property type="term" value="P:DNA-templated transcription initiation"/>
    <property type="evidence" value="ECO:0007669"/>
    <property type="project" value="InterPro"/>
</dbReference>
<dbReference type="Gene3D" id="1.10.10.10">
    <property type="entry name" value="Winged helix-like DNA-binding domain superfamily/Winged helix DNA-binding domain"/>
    <property type="match status" value="1"/>
</dbReference>
<dbReference type="InterPro" id="IPR014284">
    <property type="entry name" value="RNA_pol_sigma-70_dom"/>
</dbReference>
<dbReference type="InterPro" id="IPR007627">
    <property type="entry name" value="RNA_pol_sigma70_r2"/>
</dbReference>
<dbReference type="InterPro" id="IPR013325">
    <property type="entry name" value="RNA_pol_sigma_r2"/>
</dbReference>
<dbReference type="InterPro" id="IPR016032">
    <property type="entry name" value="Sig_transdc_resp-reg_C-effctor"/>
</dbReference>
<dbReference type="InterPro" id="IPR036388">
    <property type="entry name" value="WH-like_DNA-bd_sf"/>
</dbReference>
<dbReference type="NCBIfam" id="TIGR02937">
    <property type="entry name" value="sigma70-ECF"/>
    <property type="match status" value="1"/>
</dbReference>
<dbReference type="Pfam" id="PF04542">
    <property type="entry name" value="Sigma70_r2"/>
    <property type="match status" value="1"/>
</dbReference>
<dbReference type="SUPFAM" id="SSF46894">
    <property type="entry name" value="C-terminal effector domain of the bipartite response regulators"/>
    <property type="match status" value="1"/>
</dbReference>
<dbReference type="SUPFAM" id="SSF88946">
    <property type="entry name" value="Sigma2 domain of RNA polymerase sigma factors"/>
    <property type="match status" value="1"/>
</dbReference>
<proteinExistence type="inferred from homology"/>
<organism>
    <name type="scientific">Staphylococcus aureus (strain COL)</name>
    <dbReference type="NCBI Taxonomy" id="93062"/>
    <lineage>
        <taxon>Bacteria</taxon>
        <taxon>Bacillati</taxon>
        <taxon>Bacillota</taxon>
        <taxon>Bacilli</taxon>
        <taxon>Bacillales</taxon>
        <taxon>Staphylococcaceae</taxon>
        <taxon>Staphylococcus</taxon>
    </lineage>
</organism>
<sequence>MKFNDVYNKHHKIIHHLLKKYNISYNYDEYYQLLLIKMWQLSQIYKPSSKQSLSSFLFTRLNFYLIDLFRQQNQLKDVILCENNSPTLTEQPTYFNEHDLRLQDIFKLLNQRERLWLKLYLEGYKQFEIAEIMSLSLSTIKLIKMSVKRKCQHNFN</sequence>
<name>SIGS_STAAC</name>
<evidence type="ECO:0000250" key="1"/>
<evidence type="ECO:0000305" key="2"/>
<gene>
    <name type="primary">sigS</name>
    <name type="ordered locus">SACOL1827</name>
</gene>
<reference key="1">
    <citation type="journal article" date="2005" name="J. Bacteriol.">
        <title>Insights on evolution of virulence and resistance from the complete genome analysis of an early methicillin-resistant Staphylococcus aureus strain and a biofilm-producing methicillin-resistant Staphylococcus epidermidis strain.</title>
        <authorList>
            <person name="Gill S.R."/>
            <person name="Fouts D.E."/>
            <person name="Archer G.L."/>
            <person name="Mongodin E.F."/>
            <person name="DeBoy R.T."/>
            <person name="Ravel J."/>
            <person name="Paulsen I.T."/>
            <person name="Kolonay J.F."/>
            <person name="Brinkac L.M."/>
            <person name="Beanan M.J."/>
            <person name="Dodson R.J."/>
            <person name="Daugherty S.C."/>
            <person name="Madupu R."/>
            <person name="Angiuoli S.V."/>
            <person name="Durkin A.S."/>
            <person name="Haft D.H."/>
            <person name="Vamathevan J.J."/>
            <person name="Khouri H."/>
            <person name="Utterback T.R."/>
            <person name="Lee C."/>
            <person name="Dimitrov G."/>
            <person name="Jiang L."/>
            <person name="Qin H."/>
            <person name="Weidman J."/>
            <person name="Tran K."/>
            <person name="Kang K.H."/>
            <person name="Hance I.R."/>
            <person name="Nelson K.E."/>
            <person name="Fraser C.M."/>
        </authorList>
    </citation>
    <scope>NUCLEOTIDE SEQUENCE [LARGE SCALE GENOMIC DNA]</scope>
    <source>
        <strain>COL</strain>
    </source>
</reference>
<protein>
    <recommendedName>
        <fullName>RNA polymerase sigma factor SigS</fullName>
    </recommendedName>
</protein>